<proteinExistence type="evidence at protein level"/>
<protein>
    <recommendedName>
        <fullName>Dimethylsulfide dehydrogenase subunit alpha</fullName>
        <ecNumber>1.8.2.4</ecNumber>
    </recommendedName>
    <alternativeName>
        <fullName>DMS DH molybdenum subunit</fullName>
    </alternativeName>
    <alternativeName>
        <fullName>DMS DH subunit alpha</fullName>
    </alternativeName>
    <alternativeName>
        <fullName>Dimethyl sulfide:cytochrome c2 reductase subunit alpha</fullName>
    </alternativeName>
    <alternativeName>
        <fullName>Dimethylsulfide dehydrogenase molybdenum subunit</fullName>
    </alternativeName>
</protein>
<accession>Q8GPG4</accession>
<gene>
    <name type="primary">ddhA</name>
</gene>
<comment type="function">
    <text evidence="4">Allows photoautotrophic growth on dimethyl sulfide (DMS) as the sole electron donor.</text>
</comment>
<comment type="catalytic activity">
    <reaction evidence="4">
        <text>2 Fe(III)-[cytochrome c2] + dimethyl sulfide + H2O = 2 Fe(II)-[cytochrome c2] + dimethyl sulfoxide + 2 H(+)</text>
        <dbReference type="Rhea" id="RHEA:30227"/>
        <dbReference type="Rhea" id="RHEA-COMP:10429"/>
        <dbReference type="Rhea" id="RHEA-COMP:10430"/>
        <dbReference type="ChEBI" id="CHEBI:15377"/>
        <dbReference type="ChEBI" id="CHEBI:15378"/>
        <dbReference type="ChEBI" id="CHEBI:17437"/>
        <dbReference type="ChEBI" id="CHEBI:28262"/>
        <dbReference type="ChEBI" id="CHEBI:29033"/>
        <dbReference type="ChEBI" id="CHEBI:29034"/>
        <dbReference type="EC" id="1.8.2.4"/>
    </reaction>
</comment>
<comment type="cofactor">
    <cofactor evidence="5">
        <name>[4Fe-4S] cluster</name>
        <dbReference type="ChEBI" id="CHEBI:49883"/>
    </cofactor>
    <text evidence="5">Binds 1 [4Fe-4S] cluster.</text>
</comment>
<comment type="cofactor">
    <cofactor evidence="6">
        <name>Mo-bis(molybdopterin guanine dinucleotide)</name>
        <dbReference type="ChEBI" id="CHEBI:60539"/>
    </cofactor>
    <text evidence="6">Binds 1 molybdenum-bis(molybdopterin guanine dinucleotide) (Mo-bis-MGD) cofactor per subunit.</text>
</comment>
<comment type="subunit">
    <text evidence="4">Heterotrimer of alpha, beta and gamma subunits.</text>
</comment>
<comment type="subcellular location">
    <subcellularLocation>
        <location>Periplasm</location>
    </subcellularLocation>
</comment>
<comment type="PTM">
    <text>Predicted to be exported by the Tat system. The position of the signal peptide cleavage has been experimentally proven.</text>
</comment>
<comment type="similarity">
    <text evidence="5">Belongs to the prokaryotic molybdopterin-containing oxidoreductase family.</text>
</comment>
<sequence>MLRTTRRTLMQGASLVGAGLFAAGRGWALNRLEPIGDTLAEEYPYRDWEDLYRNEFTWDYVGKAAHCINCLGNCAFDIYVKDGIVIREEQLAKYPQISPDIPDANPRGCQKGAIHSTSMYEADRLRYPMKRVGARGEGKWQRISWDQATEEIADKIIDIYEKYGPGKLMTHTGSGNMSMMRMAAPYRFASLVGGVQLDIFTDVGDLNTGAHLAYGNALESFTSDAWFGADYIMFLLFNPVATRIPDAHFLWEAKWNGARVVSVAPDYNPSSIHSDLWMPIKQGADPFLAMSMVNVIIEGKLYNEAFMKEQTDLPILVRSDNGMLLREADLEEGGSDQVFYHWDSRTGAAVKVKGSMGSEEKTLVLGDVDPALEGSFEVGGIPVTTVFEKVRAEAAKYPPEETAAITGIGPGVVRAEAETFARAKKALLMTGFNIGRYSNGIYTSWALTLMLALTGHGGRTGGLDTSWIAWNQPALLELAFFDFKKLPRLEAGGLGEFVRGGMMEHSRQHYDNDKLKARTGFDLDELQEMIDESIDAGWMPYYGDMKGLISIADNKFRRNKNAEAYRERILEEVEELFVDINVRMDSTAQWADYLLPAAAHYEAWDLRSIAFHRFVNVFSRPVPPIGEAKSDWEIMEILTRKIQERAIARGITGYEDGDVTRDFATIHDDYTMDGTLMTDHDVVSWLVENGPEFAGATLEEGVERGFFVMGEDAGPTQKLRPSEPYHAFLQQTEGKEPYKTMTGRITFFVDHPRFVRLGATVPTARHHAGRDASNYPLNFFSPHTRWGIHSNWRSNKFMLRLQRGEPNIYISPQLAAAKGIADGAQVRVFNELSFFFAQAKFYPSLPPDTIMMEHGWEPHQFPNWRPMNVCMATLLQPLELVGGWGHLNFSLWHWNANQLAHESSVDIEPA</sequence>
<evidence type="ECO:0000255" key="1">
    <source>
        <dbReference type="PROSITE-ProRule" id="PRU00648"/>
    </source>
</evidence>
<evidence type="ECO:0000255" key="2">
    <source>
        <dbReference type="PROSITE-ProRule" id="PRU01004"/>
    </source>
</evidence>
<evidence type="ECO:0000269" key="3">
    <source>
    </source>
</evidence>
<evidence type="ECO:0000269" key="4">
    <source>
    </source>
</evidence>
<evidence type="ECO:0000305" key="5"/>
<evidence type="ECO:0000305" key="6">
    <source>
    </source>
</evidence>
<dbReference type="EC" id="1.8.2.4"/>
<dbReference type="EMBL" id="AF453479">
    <property type="protein sequence ID" value="AAN46632.1"/>
    <property type="molecule type" value="Genomic_DNA"/>
</dbReference>
<dbReference type="SMR" id="Q8GPG4"/>
<dbReference type="STRING" id="35806.A6024_07035"/>
<dbReference type="KEGG" id="ag:AAN46632"/>
<dbReference type="eggNOG" id="COG0243">
    <property type="taxonomic scope" value="Bacteria"/>
</dbReference>
<dbReference type="BioCyc" id="MetaCyc:MONOMER-14242"/>
<dbReference type="BRENDA" id="1.8.2.4">
    <property type="organism ID" value="5384"/>
</dbReference>
<dbReference type="GO" id="GO:0042597">
    <property type="term" value="C:periplasmic space"/>
    <property type="evidence" value="ECO:0007669"/>
    <property type="project" value="UniProtKB-SubCell"/>
</dbReference>
<dbReference type="GO" id="GO:0051539">
    <property type="term" value="F:4 iron, 4 sulfur cluster binding"/>
    <property type="evidence" value="ECO:0007669"/>
    <property type="project" value="UniProtKB-KW"/>
</dbReference>
<dbReference type="GO" id="GO:0046872">
    <property type="term" value="F:metal ion binding"/>
    <property type="evidence" value="ECO:0007669"/>
    <property type="project" value="UniProtKB-KW"/>
</dbReference>
<dbReference type="GO" id="GO:0043546">
    <property type="term" value="F:molybdopterin cofactor binding"/>
    <property type="evidence" value="ECO:0007669"/>
    <property type="project" value="InterPro"/>
</dbReference>
<dbReference type="GO" id="GO:0016491">
    <property type="term" value="F:oxidoreductase activity"/>
    <property type="evidence" value="ECO:0007669"/>
    <property type="project" value="UniProtKB-KW"/>
</dbReference>
<dbReference type="CDD" id="cd02776">
    <property type="entry name" value="MopB_CT_Nitrate-R-NarG-like"/>
    <property type="match status" value="1"/>
</dbReference>
<dbReference type="CDD" id="cd02750">
    <property type="entry name" value="MopB_Nitrate-R-NarG-like"/>
    <property type="match status" value="1"/>
</dbReference>
<dbReference type="Gene3D" id="3.40.50.12440">
    <property type="match status" value="4"/>
</dbReference>
<dbReference type="Gene3D" id="3.40.228.10">
    <property type="entry name" value="Dimethylsulfoxide Reductase, domain 2"/>
    <property type="match status" value="1"/>
</dbReference>
<dbReference type="InterPro" id="IPR009010">
    <property type="entry name" value="Asp_de-COase-like_dom_sf"/>
</dbReference>
<dbReference type="InterPro" id="IPR017840">
    <property type="entry name" value="DMSO_Rdtase_II_Mopterin_su"/>
</dbReference>
<dbReference type="InterPro" id="IPR037943">
    <property type="entry name" value="MopB_CT_Nitrate-R-NarG-like"/>
</dbReference>
<dbReference type="InterPro" id="IPR006657">
    <property type="entry name" value="MoPterin_dinucl-bd_dom"/>
</dbReference>
<dbReference type="InterPro" id="IPR006656">
    <property type="entry name" value="Mopterin_OxRdtase"/>
</dbReference>
<dbReference type="InterPro" id="IPR006963">
    <property type="entry name" value="Mopterin_OxRdtase_4Fe-4S_dom"/>
</dbReference>
<dbReference type="InterPro" id="IPR006655">
    <property type="entry name" value="Mopterin_OxRdtase_prok_CS"/>
</dbReference>
<dbReference type="InterPro" id="IPR050612">
    <property type="entry name" value="Prok_Mopterin_Oxidored"/>
</dbReference>
<dbReference type="InterPro" id="IPR006311">
    <property type="entry name" value="TAT_signal"/>
</dbReference>
<dbReference type="NCBIfam" id="TIGR03479">
    <property type="entry name" value="DMSO_red_II_alp"/>
    <property type="match status" value="1"/>
</dbReference>
<dbReference type="PANTHER" id="PTHR43742:SF6">
    <property type="entry name" value="OXIDOREDUCTASE YYAE-RELATED"/>
    <property type="match status" value="1"/>
</dbReference>
<dbReference type="PANTHER" id="PTHR43742">
    <property type="entry name" value="TRIMETHYLAMINE-N-OXIDE REDUCTASE"/>
    <property type="match status" value="1"/>
</dbReference>
<dbReference type="Pfam" id="PF00384">
    <property type="entry name" value="Molybdopterin"/>
    <property type="match status" value="1"/>
</dbReference>
<dbReference type="Pfam" id="PF01568">
    <property type="entry name" value="Molydop_binding"/>
    <property type="match status" value="1"/>
</dbReference>
<dbReference type="SUPFAM" id="SSF50692">
    <property type="entry name" value="ADC-like"/>
    <property type="match status" value="1"/>
</dbReference>
<dbReference type="SUPFAM" id="SSF53706">
    <property type="entry name" value="Formate dehydrogenase/DMSO reductase, domains 1-3"/>
    <property type="match status" value="1"/>
</dbReference>
<dbReference type="PROSITE" id="PS51669">
    <property type="entry name" value="4FE4S_MOW_BIS_MGD"/>
    <property type="match status" value="1"/>
</dbReference>
<dbReference type="PROSITE" id="PS00932">
    <property type="entry name" value="MOLYBDOPTERIN_PROK_3"/>
    <property type="match status" value="1"/>
</dbReference>
<dbReference type="PROSITE" id="PS51318">
    <property type="entry name" value="TAT"/>
    <property type="match status" value="1"/>
</dbReference>
<feature type="signal peptide" description="Tat-type signal" evidence="1 3">
    <location>
        <begin position="1"/>
        <end position="28"/>
    </location>
</feature>
<feature type="chain" id="PRO_0000019174" description="Dimethylsulfide dehydrogenase subunit alpha">
    <location>
        <begin position="29"/>
        <end position="910"/>
    </location>
</feature>
<feature type="domain" description="4Fe-4S Mo/W bis-MGD-type" evidence="2">
    <location>
        <begin position="59"/>
        <end position="123"/>
    </location>
</feature>
<feature type="binding site" evidence="2">
    <location>
        <position position="66"/>
    </location>
    <ligand>
        <name>[4Fe-4S] cluster</name>
        <dbReference type="ChEBI" id="CHEBI:49883"/>
    </ligand>
</feature>
<feature type="binding site" evidence="2">
    <location>
        <position position="70"/>
    </location>
    <ligand>
        <name>[4Fe-4S] cluster</name>
        <dbReference type="ChEBI" id="CHEBI:49883"/>
    </ligand>
</feature>
<feature type="binding site" evidence="2">
    <location>
        <position position="74"/>
    </location>
    <ligand>
        <name>[4Fe-4S] cluster</name>
        <dbReference type="ChEBI" id="CHEBI:49883"/>
    </ligand>
</feature>
<feature type="binding site" evidence="2">
    <location>
        <position position="109"/>
    </location>
    <ligand>
        <name>[4Fe-4S] cluster</name>
        <dbReference type="ChEBI" id="CHEBI:49883"/>
    </ligand>
</feature>
<name>DDHA_RHOSU</name>
<organism>
    <name type="scientific">Rhodovulum sulfidophilum</name>
    <name type="common">Rhodobacter sulfidophilus</name>
    <dbReference type="NCBI Taxonomy" id="35806"/>
    <lineage>
        <taxon>Bacteria</taxon>
        <taxon>Pseudomonadati</taxon>
        <taxon>Pseudomonadota</taxon>
        <taxon>Alphaproteobacteria</taxon>
        <taxon>Rhodobacterales</taxon>
        <taxon>Paracoccaceae</taxon>
        <taxon>Rhodovulum</taxon>
    </lineage>
</organism>
<reference key="1">
    <citation type="journal article" date="2002" name="Mol. Microbiol.">
        <title>Molecular analysis of dimethyl sulphide dehydrogenase from Rhodovulum sulfidophilum: its place in the dimethyl sulphoxide reductase family of microbial molybdopterin-containing enzymes.</title>
        <authorList>
            <person name="McDevitt C.A."/>
            <person name="Hugenholtz P."/>
            <person name="Hanson G.R."/>
            <person name="McEwan A.G."/>
        </authorList>
    </citation>
    <scope>NUCLEOTIDE SEQUENCE [GENOMIC DNA]</scope>
    <scope>PROTEIN SEQUENCE OF 29-38</scope>
    <source>
        <strain>SH1</strain>
    </source>
</reference>
<reference key="2">
    <citation type="journal article" date="1996" name="Eur. J. Biochem.">
        <title>Dimethylsulfide:acceptor oxidoreductase from Rhodobacter sulfidophilus. The purified enzyme contains b-type haem and a pterin molybdenum cofactor.</title>
        <authorList>
            <person name="Hanlon S.P."/>
            <person name="Toh T.H."/>
            <person name="Solomon P.S."/>
            <person name="Holt R.A."/>
            <person name="McEwan A.G."/>
        </authorList>
    </citation>
    <scope>CATALYTIC ACTIVITY</scope>
    <scope>FUNCTION</scope>
    <scope>SUBSTRATE SPECIFICITY</scope>
    <scope>SUBUNIT</scope>
    <scope>COFACTOR</scope>
</reference>
<keyword id="KW-0004">4Fe-4S</keyword>
<keyword id="KW-0903">Direct protein sequencing</keyword>
<keyword id="KW-0408">Iron</keyword>
<keyword id="KW-0411">Iron-sulfur</keyword>
<keyword id="KW-0479">Metal-binding</keyword>
<keyword id="KW-0500">Molybdenum</keyword>
<keyword id="KW-0560">Oxidoreductase</keyword>
<keyword id="KW-0574">Periplasm</keyword>
<keyword id="KW-0732">Signal</keyword>